<accession>P28057</accession>
<accession>B1XIH4</accession>
<keyword id="KW-0249">Electron transport</keyword>
<keyword id="KW-0472">Membrane</keyword>
<keyword id="KW-0602">Photosynthesis</keyword>
<keyword id="KW-1185">Reference proteome</keyword>
<keyword id="KW-0793">Thylakoid</keyword>
<keyword id="KW-0812">Transmembrane</keyword>
<keyword id="KW-1133">Transmembrane helix</keyword>
<keyword id="KW-0813">Transport</keyword>
<name>PETD_PICP2</name>
<protein>
    <recommendedName>
        <fullName evidence="1">Cytochrome b6-f complex subunit 4</fullName>
    </recommendedName>
    <alternativeName>
        <fullName evidence="1">17 kDa polypeptide</fullName>
    </alternativeName>
</protein>
<evidence type="ECO:0000255" key="1">
    <source>
        <dbReference type="HAMAP-Rule" id="MF_01344"/>
    </source>
</evidence>
<comment type="function">
    <text evidence="1">Component of the cytochrome b6-f complex, which mediates electron transfer between photosystem II (PSII) and photosystem I (PSI), cyclic electron flow around PSI, and state transitions.</text>
</comment>
<comment type="subunit">
    <text evidence="1">The 4 large subunits of the cytochrome b6-f complex are cytochrome b6, subunit IV (17 kDa polypeptide, PetD), cytochrome f and the Rieske protein, while the 4 small subunits are PetG, PetL, PetM and PetN. The complex functions as a dimer.</text>
</comment>
<comment type="subcellular location">
    <subcellularLocation>
        <location evidence="1">Cellular thylakoid membrane</location>
        <topology evidence="1">Multi-pass membrane protein</topology>
    </subcellularLocation>
</comment>
<comment type="similarity">
    <text evidence="1">Belongs to the cytochrome b family. PetD subfamily.</text>
</comment>
<feature type="chain" id="PRO_0000061909" description="Cytochrome b6-f complex subunit 4">
    <location>
        <begin position="1"/>
        <end position="160"/>
    </location>
</feature>
<feature type="transmembrane region" description="Helical" evidence="1">
    <location>
        <begin position="36"/>
        <end position="56"/>
    </location>
</feature>
<feature type="transmembrane region" description="Helical" evidence="1">
    <location>
        <begin position="95"/>
        <end position="115"/>
    </location>
</feature>
<feature type="transmembrane region" description="Helical" evidence="1">
    <location>
        <begin position="131"/>
        <end position="151"/>
    </location>
</feature>
<sequence>MSIMKKPDLSDPKLRAKLAQNMGHNYYGEPAWPNDILFTFPICIAGTIGLITGLAILDPAMIGEPGNPFATPLEILPEWYLYPVFQILRVLPNKLLGIACQGAIPLGLMMVPFIESVNKFQNPFRRPVAMAVFLFGTAVTLWLGAGACFPIDESLTLGLF</sequence>
<organism>
    <name type="scientific">Picosynechococcus sp. (strain ATCC 27264 / PCC 7002 / PR-6)</name>
    <name type="common">Agmenellum quadruplicatum</name>
    <dbReference type="NCBI Taxonomy" id="32049"/>
    <lineage>
        <taxon>Bacteria</taxon>
        <taxon>Bacillati</taxon>
        <taxon>Cyanobacteriota</taxon>
        <taxon>Cyanophyceae</taxon>
        <taxon>Oscillatoriophycideae</taxon>
        <taxon>Chroococcales</taxon>
        <taxon>Geminocystaceae</taxon>
        <taxon>Picosynechococcus</taxon>
    </lineage>
</organism>
<dbReference type="EMBL" id="X63049">
    <property type="protein sequence ID" value="CAA44775.1"/>
    <property type="molecule type" value="Genomic_DNA"/>
</dbReference>
<dbReference type="EMBL" id="CP000951">
    <property type="protein sequence ID" value="ACA98845.1"/>
    <property type="molecule type" value="Genomic_DNA"/>
</dbReference>
<dbReference type="RefSeq" id="WP_012306469.1">
    <property type="nucleotide sequence ID" value="NZ_JAHHPU010000001.1"/>
</dbReference>
<dbReference type="SMR" id="P28057"/>
<dbReference type="STRING" id="32049.SYNPCC7002_A0841"/>
<dbReference type="KEGG" id="syp:SYNPCC7002_A0841"/>
<dbReference type="eggNOG" id="COG1290">
    <property type="taxonomic scope" value="Bacteria"/>
</dbReference>
<dbReference type="HOGENOM" id="CLU_112652_0_0_3"/>
<dbReference type="Proteomes" id="UP000001688">
    <property type="component" value="Chromosome"/>
</dbReference>
<dbReference type="GO" id="GO:0031676">
    <property type="term" value="C:plasma membrane-derived thylakoid membrane"/>
    <property type="evidence" value="ECO:0007669"/>
    <property type="project" value="UniProtKB-SubCell"/>
</dbReference>
<dbReference type="GO" id="GO:0045158">
    <property type="term" value="F:electron transporter, transferring electrons within cytochrome b6/f complex of photosystem II activity"/>
    <property type="evidence" value="ECO:0007669"/>
    <property type="project" value="UniProtKB-UniRule"/>
</dbReference>
<dbReference type="GO" id="GO:0045156">
    <property type="term" value="F:electron transporter, transferring electrons within the cyclic electron transport pathway of photosynthesis activity"/>
    <property type="evidence" value="ECO:0007669"/>
    <property type="project" value="InterPro"/>
</dbReference>
<dbReference type="GO" id="GO:0016491">
    <property type="term" value="F:oxidoreductase activity"/>
    <property type="evidence" value="ECO:0007669"/>
    <property type="project" value="InterPro"/>
</dbReference>
<dbReference type="GO" id="GO:0009767">
    <property type="term" value="P:photosynthetic electron transport chain"/>
    <property type="evidence" value="ECO:0007669"/>
    <property type="project" value="InterPro"/>
</dbReference>
<dbReference type="CDD" id="cd00290">
    <property type="entry name" value="cytochrome_b_C"/>
    <property type="match status" value="1"/>
</dbReference>
<dbReference type="FunFam" id="1.10.287.980:FF:000001">
    <property type="entry name" value="Cytochrome b6-f complex subunit 4"/>
    <property type="match status" value="1"/>
</dbReference>
<dbReference type="FunFam" id="1.20.5.510:FF:000002">
    <property type="entry name" value="Cytochrome b6-f complex subunit 4"/>
    <property type="match status" value="1"/>
</dbReference>
<dbReference type="Gene3D" id="1.10.287.980">
    <property type="entry name" value="plastocyanin oxidoreductase"/>
    <property type="match status" value="1"/>
</dbReference>
<dbReference type="Gene3D" id="1.20.5.510">
    <property type="entry name" value="Single helix bin"/>
    <property type="match status" value="1"/>
</dbReference>
<dbReference type="HAMAP" id="MF_01344">
    <property type="entry name" value="Cytb6_f_subIV"/>
    <property type="match status" value="1"/>
</dbReference>
<dbReference type="InterPro" id="IPR005798">
    <property type="entry name" value="Cyt_b/b6_C"/>
</dbReference>
<dbReference type="InterPro" id="IPR036150">
    <property type="entry name" value="Cyt_b/b6_C_sf"/>
</dbReference>
<dbReference type="InterPro" id="IPR005870">
    <property type="entry name" value="Cyt_b6/f_cplx_suIV"/>
</dbReference>
<dbReference type="InterPro" id="IPR048260">
    <property type="entry name" value="Cytochrome_b_C_euk/bac"/>
</dbReference>
<dbReference type="NCBIfam" id="TIGR01156">
    <property type="entry name" value="cytb6_f_IV"/>
    <property type="match status" value="1"/>
</dbReference>
<dbReference type="PANTHER" id="PTHR19271">
    <property type="entry name" value="CYTOCHROME B"/>
    <property type="match status" value="1"/>
</dbReference>
<dbReference type="PANTHER" id="PTHR19271:SF40">
    <property type="entry name" value="CYTOCHROME B"/>
    <property type="match status" value="1"/>
</dbReference>
<dbReference type="Pfam" id="PF00032">
    <property type="entry name" value="Cytochrom_B_C"/>
    <property type="match status" value="1"/>
</dbReference>
<dbReference type="PIRSF" id="PIRSF000033">
    <property type="entry name" value="B6f_17K"/>
    <property type="match status" value="1"/>
</dbReference>
<dbReference type="SUPFAM" id="SSF81648">
    <property type="entry name" value="a domain/subunit of cytochrome bc1 complex (Ubiquinol-cytochrome c reductase)"/>
    <property type="match status" value="1"/>
</dbReference>
<dbReference type="PROSITE" id="PS51003">
    <property type="entry name" value="CYTB_CTER"/>
    <property type="match status" value="1"/>
</dbReference>
<proteinExistence type="inferred from homology"/>
<reference key="1">
    <citation type="journal article" date="1992" name="Plant Mol. Biol.">
        <title>Cloning and sequencing of the petBD operon from the cyanobacterium Synechococcus sp. PCC 7002.</title>
        <authorList>
            <person name="Brand S.N."/>
            <person name="Tan X."/>
            <person name="Widger W.R."/>
        </authorList>
    </citation>
    <scope>NUCLEOTIDE SEQUENCE [GENOMIC DNA]</scope>
</reference>
<reference key="2">
    <citation type="submission" date="2008-02" db="EMBL/GenBank/DDBJ databases">
        <title>Complete sequence of Synechococcus sp. PCC 7002.</title>
        <authorList>
            <person name="Li T."/>
            <person name="Zhao J."/>
            <person name="Zhao C."/>
            <person name="Liu Z."/>
            <person name="Zhao F."/>
            <person name="Marquardt J."/>
            <person name="Nomura C.T."/>
            <person name="Persson S."/>
            <person name="Detter J.C."/>
            <person name="Richardson P.M."/>
            <person name="Lanz C."/>
            <person name="Schuster S.C."/>
            <person name="Wang J."/>
            <person name="Li S."/>
            <person name="Huang X."/>
            <person name="Cai T."/>
            <person name="Yu Z."/>
            <person name="Luo J."/>
            <person name="Zhao J."/>
            <person name="Bryant D.A."/>
        </authorList>
    </citation>
    <scope>NUCLEOTIDE SEQUENCE [LARGE SCALE GENOMIC DNA]</scope>
    <source>
        <strain>ATCC 27264 / PCC 7002 / PR-6</strain>
    </source>
</reference>
<gene>
    <name evidence="1" type="primary">petD</name>
    <name type="ordered locus">SYNPCC7002_A0841</name>
</gene>